<name>IFT22_BOVIN</name>
<organism>
    <name type="scientific">Bos taurus</name>
    <name type="common">Bovine</name>
    <dbReference type="NCBI Taxonomy" id="9913"/>
    <lineage>
        <taxon>Eukaryota</taxon>
        <taxon>Metazoa</taxon>
        <taxon>Chordata</taxon>
        <taxon>Craniata</taxon>
        <taxon>Vertebrata</taxon>
        <taxon>Euteleostomi</taxon>
        <taxon>Mammalia</taxon>
        <taxon>Eutheria</taxon>
        <taxon>Laurasiatheria</taxon>
        <taxon>Artiodactyla</taxon>
        <taxon>Ruminantia</taxon>
        <taxon>Pecora</taxon>
        <taxon>Bovidae</taxon>
        <taxon>Bovinae</taxon>
        <taxon>Bos</taxon>
    </lineage>
</organism>
<keyword id="KW-0025">Alternative splicing</keyword>
<keyword id="KW-0966">Cell projection</keyword>
<keyword id="KW-0969">Cilium</keyword>
<keyword id="KW-0342">GTP-binding</keyword>
<keyword id="KW-0547">Nucleotide-binding</keyword>
<keyword id="KW-1185">Reference proteome</keyword>
<dbReference type="EMBL" id="BT020926">
    <property type="protein sequence ID" value="AAX08943.1"/>
    <property type="molecule type" value="mRNA"/>
</dbReference>
<dbReference type="EMBL" id="BC102614">
    <property type="protein sequence ID" value="AAI02615.1"/>
    <property type="molecule type" value="mRNA"/>
</dbReference>
<dbReference type="RefSeq" id="NP_001015612.1">
    <molecule id="Q5E9J4-1"/>
    <property type="nucleotide sequence ID" value="NM_001015612.1"/>
</dbReference>
<dbReference type="RefSeq" id="XP_005225173.2">
    <molecule id="Q5E9J4-2"/>
    <property type="nucleotide sequence ID" value="XM_005225116.5"/>
</dbReference>
<dbReference type="SMR" id="Q5E9J4"/>
<dbReference type="FunCoup" id="Q5E9J4">
    <property type="interactions" value="1672"/>
</dbReference>
<dbReference type="STRING" id="9913.ENSBTAP00000063854"/>
<dbReference type="PaxDb" id="9913-ENSBTAP00000019073"/>
<dbReference type="Ensembl" id="ENSBTAT00000019073.5">
    <molecule id="Q5E9J4-1"/>
    <property type="protein sequence ID" value="ENSBTAP00000019073.4"/>
    <property type="gene ID" value="ENSBTAG00000014343.7"/>
</dbReference>
<dbReference type="Ensembl" id="ENSBTAT00000116425.1">
    <molecule id="Q5E9J4-2"/>
    <property type="protein sequence ID" value="ENSBTAP00000093349.1"/>
    <property type="gene ID" value="ENSBTAG00000014343.7"/>
</dbReference>
<dbReference type="GeneID" id="516107"/>
<dbReference type="KEGG" id="bta:516107"/>
<dbReference type="CTD" id="64792"/>
<dbReference type="VEuPathDB" id="HostDB:ENSBTAG00000014343"/>
<dbReference type="eggNOG" id="ENOG502RXD4">
    <property type="taxonomic scope" value="Eukaryota"/>
</dbReference>
<dbReference type="GeneTree" id="ENSGT00390000013187"/>
<dbReference type="InParanoid" id="Q5E9J4"/>
<dbReference type="OMA" id="NERHDQE"/>
<dbReference type="OrthoDB" id="275177at2759"/>
<dbReference type="Reactome" id="R-BTA-5620924">
    <property type="pathway name" value="Intraflagellar transport"/>
</dbReference>
<dbReference type="Proteomes" id="UP000009136">
    <property type="component" value="Chromosome 25"/>
</dbReference>
<dbReference type="Bgee" id="ENSBTAG00000014343">
    <property type="expression patterns" value="Expressed in semen and 106 other cell types or tissues"/>
</dbReference>
<dbReference type="GO" id="GO:0005929">
    <property type="term" value="C:cilium"/>
    <property type="evidence" value="ECO:0007669"/>
    <property type="project" value="UniProtKB-SubCell"/>
</dbReference>
<dbReference type="GO" id="GO:0012505">
    <property type="term" value="C:endomembrane system"/>
    <property type="evidence" value="ECO:0000318"/>
    <property type="project" value="GO_Central"/>
</dbReference>
<dbReference type="GO" id="GO:0030992">
    <property type="term" value="C:intraciliary transport particle B"/>
    <property type="evidence" value="ECO:0000250"/>
    <property type="project" value="UniProtKB"/>
</dbReference>
<dbReference type="GO" id="GO:0005525">
    <property type="term" value="F:GTP binding"/>
    <property type="evidence" value="ECO:0007669"/>
    <property type="project" value="UniProtKB-KW"/>
</dbReference>
<dbReference type="GO" id="GO:0003924">
    <property type="term" value="F:GTPase activity"/>
    <property type="evidence" value="ECO:0000318"/>
    <property type="project" value="GO_Central"/>
</dbReference>
<dbReference type="GO" id="GO:0006886">
    <property type="term" value="P:intracellular protein transport"/>
    <property type="evidence" value="ECO:0000318"/>
    <property type="project" value="GO_Central"/>
</dbReference>
<dbReference type="FunFam" id="3.40.50.300:FF:001100">
    <property type="entry name" value="intraflagellar transport protein 22 homolog"/>
    <property type="match status" value="1"/>
</dbReference>
<dbReference type="Gene3D" id="3.40.50.300">
    <property type="entry name" value="P-loop containing nucleotide triphosphate hydrolases"/>
    <property type="match status" value="1"/>
</dbReference>
<dbReference type="InterPro" id="IPR027417">
    <property type="entry name" value="P-loop_NTPase"/>
</dbReference>
<dbReference type="PANTHER" id="PTHR24073">
    <property type="entry name" value="DRAB5-RELATED"/>
    <property type="match status" value="1"/>
</dbReference>
<dbReference type="Pfam" id="PF08477">
    <property type="entry name" value="Roc"/>
    <property type="match status" value="1"/>
</dbReference>
<dbReference type="SUPFAM" id="SSF52540">
    <property type="entry name" value="P-loop containing nucleoside triphosphate hydrolases"/>
    <property type="match status" value="1"/>
</dbReference>
<comment type="function">
    <text evidence="1">Small GTPase-like component of the intraflagellar transport (IFT) complex B.</text>
</comment>
<comment type="subunit">
    <text evidence="1 2">Component of the IFT complex B, at least composed of IFT20, IFT22, IFT25, IFT27, IFT46, IFT52, TRAF3IP1/IFT54, IFT57, IFT74, IFT80, IFT81, and IFT88. Interacts with IFT88 (By similarity). Interacts with CFAP61 (By similarity).</text>
</comment>
<comment type="subcellular location">
    <subcellularLocation>
        <location evidence="1">Cell projection</location>
        <location evidence="1">Cilium</location>
    </subcellularLocation>
</comment>
<comment type="alternative products">
    <event type="alternative splicing"/>
    <isoform>
        <id>Q5E9J4-1</id>
        <name>1</name>
        <sequence type="displayed"/>
    </isoform>
    <isoform>
        <id>Q5E9J4-2</id>
        <name>2</name>
        <sequence type="described" ref="VSP_021111"/>
    </isoform>
</comment>
<comment type="similarity">
    <text evidence="4">Belongs to the small GTPase superfamily. Rab family.</text>
</comment>
<feature type="chain" id="PRO_0000253732" description="Intraflagellar transport protein 22 homolog">
    <location>
        <begin position="1"/>
        <end position="185"/>
    </location>
</feature>
<feature type="binding site" evidence="1">
    <location>
        <begin position="10"/>
        <end position="17"/>
    </location>
    <ligand>
        <name>GTP</name>
        <dbReference type="ChEBI" id="CHEBI:37565"/>
    </ligand>
</feature>
<feature type="binding site" evidence="1">
    <location>
        <begin position="63"/>
        <end position="67"/>
    </location>
    <ligand>
        <name>GTP</name>
        <dbReference type="ChEBI" id="CHEBI:37565"/>
    </ligand>
</feature>
<feature type="binding site" evidence="1">
    <location>
        <begin position="123"/>
        <end position="126"/>
    </location>
    <ligand>
        <name>GTP</name>
        <dbReference type="ChEBI" id="CHEBI:37565"/>
    </ligand>
</feature>
<feature type="splice variant" id="VSP_021111" description="In isoform 2." evidence="3">
    <location>
        <begin position="40"/>
        <end position="69"/>
    </location>
</feature>
<protein>
    <recommendedName>
        <fullName>Intraflagellar transport protein 22 homolog</fullName>
    </recommendedName>
    <alternativeName>
        <fullName>Rab-like protein 5</fullName>
    </alternativeName>
</protein>
<reference key="1">
    <citation type="journal article" date="2005" name="BMC Genomics">
        <title>Characterization of 954 bovine full-CDS cDNA sequences.</title>
        <authorList>
            <person name="Harhay G.P."/>
            <person name="Sonstegard T.S."/>
            <person name="Keele J.W."/>
            <person name="Heaton M.P."/>
            <person name="Clawson M.L."/>
            <person name="Snelling W.M."/>
            <person name="Wiedmann R.T."/>
            <person name="Van Tassell C.P."/>
            <person name="Smith T.P.L."/>
        </authorList>
    </citation>
    <scope>NUCLEOTIDE SEQUENCE [LARGE SCALE MRNA] (ISOFORM 1)</scope>
</reference>
<reference key="2">
    <citation type="submission" date="2005-08" db="EMBL/GenBank/DDBJ databases">
        <authorList>
            <consortium name="NIH - Mammalian Gene Collection (MGC) project"/>
        </authorList>
    </citation>
    <scope>NUCLEOTIDE SEQUENCE [LARGE SCALE MRNA] (ISOFORM 2)</scope>
    <source>
        <strain>Crossbred X Angus</strain>
        <tissue>Liver</tissue>
    </source>
</reference>
<accession>Q5E9J4</accession>
<accession>Q3T011</accession>
<evidence type="ECO:0000250" key="1"/>
<evidence type="ECO:0000250" key="2">
    <source>
        <dbReference type="UniProtKB" id="Q9DAI2"/>
    </source>
</evidence>
<evidence type="ECO:0000303" key="3">
    <source ref="2"/>
</evidence>
<evidence type="ECO:0000305" key="4"/>
<gene>
    <name type="primary">IFT22</name>
    <name type="synonym">RABL5</name>
</gene>
<proteinExistence type="evidence at transcript level"/>
<sequence>MLKAKILFVGPCESGKTVLANFLTESSDITEYNPTQGVRILEFENPHVTSNNKGTGCEFELWDCGGDPKFESCWPALMKDSHGVVIVFNADIPSHLKEIETWYSCFVQQQFLQNTQCLLIAHHKPGSGSDKDNPALAPPLNKLKLVHSNLEDDPEEIRMEFIKYLRSIINSVSESRDREEMSIIT</sequence>